<protein>
    <recommendedName>
        <fullName evidence="1">Small ribosomal subunit protein uS14</fullName>
    </recommendedName>
    <alternativeName>
        <fullName evidence="3">30S ribosomal protein S14 type Z</fullName>
    </alternativeName>
    <alternativeName>
        <fullName>HmaS14</fullName>
    </alternativeName>
</protein>
<evidence type="ECO:0000255" key="1">
    <source>
        <dbReference type="HAMAP-Rule" id="MF_01364"/>
    </source>
</evidence>
<evidence type="ECO:0000256" key="2">
    <source>
        <dbReference type="SAM" id="MobiDB-lite"/>
    </source>
</evidence>
<evidence type="ECO:0000305" key="3"/>
<proteinExistence type="inferred from homology"/>
<name>RS14Z_HALMA</name>
<sequence length="61" mass="7017">MSESETTDEPDSETASSERTGQLESCQRCGREQGLVGKYDIWLCRQCFREISRGMGFRKYS</sequence>
<accession>P26816</accession>
<gene>
    <name evidence="1" type="primary">rps14</name>
    <name type="ordered locus">rrnAC1597.1</name>
</gene>
<reference key="1">
    <citation type="journal article" date="1991" name="Mol. Gen. Genet.">
        <title>Organization and nucleotide sequence of ten ribosomal protein genes from the region equivalent to the spectinomycin operon in the archaebacterium Halobacterium marismortui.</title>
        <authorList>
            <person name="Scholzen T."/>
            <person name="Arndt E."/>
        </authorList>
    </citation>
    <scope>NUCLEOTIDE SEQUENCE [GENOMIC DNA]</scope>
</reference>
<reference key="2">
    <citation type="journal article" date="2004" name="Genome Res.">
        <title>Genome sequence of Haloarcula marismortui: a halophilic archaeon from the Dead Sea.</title>
        <authorList>
            <person name="Baliga N.S."/>
            <person name="Bonneau R."/>
            <person name="Facciotti M.T."/>
            <person name="Pan M."/>
            <person name="Glusman G."/>
            <person name="Deutsch E.W."/>
            <person name="Shannon P."/>
            <person name="Chiu Y."/>
            <person name="Weng R.S."/>
            <person name="Gan R.R."/>
            <person name="Hung P."/>
            <person name="Date S.V."/>
            <person name="Marcotte E."/>
            <person name="Hood L."/>
            <person name="Ng W.V."/>
        </authorList>
    </citation>
    <scope>NUCLEOTIDE SEQUENCE [LARGE SCALE GENOMIC DNA]</scope>
    <source>
        <strain>ATCC 43049 / DSM 3752 / JCM 8966 / VKM B-1809</strain>
    </source>
</reference>
<feature type="chain" id="PRO_0000130990" description="Small ribosomal subunit protein uS14">
    <location>
        <begin position="1"/>
        <end position="61"/>
    </location>
</feature>
<feature type="region of interest" description="Disordered" evidence="2">
    <location>
        <begin position="1"/>
        <end position="25"/>
    </location>
</feature>
<feature type="compositionally biased region" description="Acidic residues" evidence="2">
    <location>
        <begin position="1"/>
        <end position="12"/>
    </location>
</feature>
<feature type="binding site" evidence="1">
    <location>
        <position position="26"/>
    </location>
    <ligand>
        <name>Zn(2+)</name>
        <dbReference type="ChEBI" id="CHEBI:29105"/>
    </ligand>
</feature>
<feature type="binding site" evidence="1">
    <location>
        <position position="29"/>
    </location>
    <ligand>
        <name>Zn(2+)</name>
        <dbReference type="ChEBI" id="CHEBI:29105"/>
    </ligand>
</feature>
<feature type="binding site" evidence="1">
    <location>
        <position position="44"/>
    </location>
    <ligand>
        <name>Zn(2+)</name>
        <dbReference type="ChEBI" id="CHEBI:29105"/>
    </ligand>
</feature>
<feature type="binding site" evidence="1">
    <location>
        <position position="47"/>
    </location>
    <ligand>
        <name>Zn(2+)</name>
        <dbReference type="ChEBI" id="CHEBI:29105"/>
    </ligand>
</feature>
<comment type="function">
    <text evidence="1">Binds 16S rRNA, required for the assembly of 30S particles.</text>
</comment>
<comment type="cofactor">
    <cofactor evidence="1">
        <name>Zn(2+)</name>
        <dbReference type="ChEBI" id="CHEBI:29105"/>
    </cofactor>
    <text evidence="1">Binds 1 zinc ion per subunit.</text>
</comment>
<comment type="subunit">
    <text evidence="1">Part of the 30S ribosomal subunit.</text>
</comment>
<comment type="similarity">
    <text evidence="1">Belongs to the universal ribosomal protein uS14 family. Zinc-binding uS14 subfamily.</text>
</comment>
<organism>
    <name type="scientific">Haloarcula marismortui (strain ATCC 43049 / DSM 3752 / JCM 8966 / VKM B-1809)</name>
    <name type="common">Halobacterium marismortui</name>
    <dbReference type="NCBI Taxonomy" id="272569"/>
    <lineage>
        <taxon>Archaea</taxon>
        <taxon>Methanobacteriati</taxon>
        <taxon>Methanobacteriota</taxon>
        <taxon>Stenosarchaea group</taxon>
        <taxon>Halobacteria</taxon>
        <taxon>Halobacteriales</taxon>
        <taxon>Haloarculaceae</taxon>
        <taxon>Haloarcula</taxon>
    </lineage>
</organism>
<keyword id="KW-0479">Metal-binding</keyword>
<keyword id="KW-1185">Reference proteome</keyword>
<keyword id="KW-0687">Ribonucleoprotein</keyword>
<keyword id="KW-0689">Ribosomal protein</keyword>
<keyword id="KW-0694">RNA-binding</keyword>
<keyword id="KW-0699">rRNA-binding</keyword>
<keyword id="KW-0862">Zinc</keyword>
<dbReference type="EMBL" id="X58395">
    <property type="protein sequence ID" value="CAA41285.1"/>
    <property type="molecule type" value="Genomic_DNA"/>
</dbReference>
<dbReference type="EMBL" id="AY596297">
    <property type="status" value="NOT_ANNOTATED_CDS"/>
    <property type="molecule type" value="Genomic_DNA"/>
</dbReference>
<dbReference type="PIR" id="S16536">
    <property type="entry name" value="S16536"/>
</dbReference>
<dbReference type="RefSeq" id="WP_004591563.1">
    <property type="nucleotide sequence ID" value="NZ_CP039138.1"/>
</dbReference>
<dbReference type="SMR" id="P26816"/>
<dbReference type="Proteomes" id="UP000001169">
    <property type="component" value="Chromosome I"/>
</dbReference>
<dbReference type="GO" id="GO:0022627">
    <property type="term" value="C:cytosolic small ribosomal subunit"/>
    <property type="evidence" value="ECO:0007669"/>
    <property type="project" value="TreeGrafter"/>
</dbReference>
<dbReference type="GO" id="GO:0019843">
    <property type="term" value="F:rRNA binding"/>
    <property type="evidence" value="ECO:0007669"/>
    <property type="project" value="UniProtKB-UniRule"/>
</dbReference>
<dbReference type="GO" id="GO:0003735">
    <property type="term" value="F:structural constituent of ribosome"/>
    <property type="evidence" value="ECO:0007669"/>
    <property type="project" value="InterPro"/>
</dbReference>
<dbReference type="GO" id="GO:0008270">
    <property type="term" value="F:zinc ion binding"/>
    <property type="evidence" value="ECO:0007669"/>
    <property type="project" value="UniProtKB-UniRule"/>
</dbReference>
<dbReference type="GO" id="GO:0002181">
    <property type="term" value="P:cytoplasmic translation"/>
    <property type="evidence" value="ECO:0007669"/>
    <property type="project" value="TreeGrafter"/>
</dbReference>
<dbReference type="Gene3D" id="4.10.830.10">
    <property type="entry name" value="30s Ribosomal Protein S14, Chain N"/>
    <property type="match status" value="1"/>
</dbReference>
<dbReference type="HAMAP" id="MF_01364_A">
    <property type="entry name" value="Ribosomal_uS14_2_A"/>
    <property type="match status" value="1"/>
</dbReference>
<dbReference type="InterPro" id="IPR001209">
    <property type="entry name" value="Ribosomal_uS14"/>
</dbReference>
<dbReference type="InterPro" id="IPR023676">
    <property type="entry name" value="Ribosomal_uS14_arc"/>
</dbReference>
<dbReference type="InterPro" id="IPR018271">
    <property type="entry name" value="Ribosomal_uS14_CS"/>
</dbReference>
<dbReference type="InterPro" id="IPR039744">
    <property type="entry name" value="RIbosomal_uS14_euk_arc"/>
</dbReference>
<dbReference type="InterPro" id="IPR043140">
    <property type="entry name" value="Ribosomal_uS14_sf"/>
</dbReference>
<dbReference type="NCBIfam" id="NF004424">
    <property type="entry name" value="PRK05766.1"/>
    <property type="match status" value="1"/>
</dbReference>
<dbReference type="PANTHER" id="PTHR12010">
    <property type="entry name" value="40S RIBOSOMAL PROTEIN S29"/>
    <property type="match status" value="1"/>
</dbReference>
<dbReference type="PANTHER" id="PTHR12010:SF2">
    <property type="entry name" value="40S RIBOSOMAL PROTEIN S29"/>
    <property type="match status" value="1"/>
</dbReference>
<dbReference type="Pfam" id="PF00253">
    <property type="entry name" value="Ribosomal_S14"/>
    <property type="match status" value="1"/>
</dbReference>
<dbReference type="PROSITE" id="PS00527">
    <property type="entry name" value="RIBOSOMAL_S14"/>
    <property type="match status" value="1"/>
</dbReference>